<comment type="function">
    <text evidence="1">Required for accurate and efficient protein synthesis under certain stress conditions. May act as a fidelity factor of the translation reaction, by catalyzing a one-codon backward translocation of tRNAs on improperly translocated ribosomes. Back-translocation proceeds from a post-translocation (POST) complex to a pre-translocation (PRE) complex, thus giving elongation factor G a second chance to translocate the tRNAs correctly. Binds to ribosomes in a GTP-dependent manner.</text>
</comment>
<comment type="catalytic activity">
    <reaction evidence="1">
        <text>GTP + H2O = GDP + phosphate + H(+)</text>
        <dbReference type="Rhea" id="RHEA:19669"/>
        <dbReference type="ChEBI" id="CHEBI:15377"/>
        <dbReference type="ChEBI" id="CHEBI:15378"/>
        <dbReference type="ChEBI" id="CHEBI:37565"/>
        <dbReference type="ChEBI" id="CHEBI:43474"/>
        <dbReference type="ChEBI" id="CHEBI:58189"/>
        <dbReference type="EC" id="3.6.5.n1"/>
    </reaction>
</comment>
<comment type="subcellular location">
    <subcellularLocation>
        <location evidence="1">Cell membrane</location>
        <topology evidence="1">Peripheral membrane protein</topology>
        <orientation evidence="1">Cytoplasmic side</orientation>
    </subcellularLocation>
</comment>
<comment type="similarity">
    <text evidence="1">Belongs to the TRAFAC class translation factor GTPase superfamily. Classic translation factor GTPase family. LepA subfamily.</text>
</comment>
<protein>
    <recommendedName>
        <fullName evidence="1">Elongation factor 4</fullName>
        <shortName evidence="1">EF-4</shortName>
        <ecNumber evidence="1">3.6.5.n1</ecNumber>
    </recommendedName>
    <alternativeName>
        <fullName evidence="1">Ribosomal back-translocase LepA</fullName>
    </alternativeName>
</protein>
<evidence type="ECO:0000255" key="1">
    <source>
        <dbReference type="HAMAP-Rule" id="MF_00071"/>
    </source>
</evidence>
<feature type="chain" id="PRO_1000071179" description="Elongation factor 4">
    <location>
        <begin position="1"/>
        <end position="601"/>
    </location>
</feature>
<feature type="domain" description="tr-type G">
    <location>
        <begin position="6"/>
        <end position="188"/>
    </location>
</feature>
<feature type="binding site" evidence="1">
    <location>
        <begin position="18"/>
        <end position="23"/>
    </location>
    <ligand>
        <name>GTP</name>
        <dbReference type="ChEBI" id="CHEBI:37565"/>
    </ligand>
</feature>
<feature type="binding site" evidence="1">
    <location>
        <begin position="135"/>
        <end position="138"/>
    </location>
    <ligand>
        <name>GTP</name>
        <dbReference type="ChEBI" id="CHEBI:37565"/>
    </ligand>
</feature>
<name>LEPA_DESRM</name>
<sequence length="601" mass="67234">MSTPQNRIRNFCIIAHIDHGKSTLADRILEETGALSQREMTEQVLDKMDLERERGITIKLQAVRLFHRAEDGQEYQLNLIDTPGHVDFTYEVSRSLAACEGALLVVDASQGIEAQTLANVYLALENDLEIIPVINKIDLPSAEPERVKQEIEDVIGLDTSEAVLASAKTGAGIKEILEQVVTKIAPPKGDSEAPLQALIFDSHYDAYRGVIAYIRVVQGTLKPGMRIRMMATKKEFEVTEVGVFTPHMTFVDELKTGEVGLVAASMKNVQDVRVGDTITAAQNPAPAPLPGYRKVTPMVFCGLYPVDTVDYEDLRDALDKLKLNDASLIYEPETSDALGFGFRCGFLGLLHMEIIQERLEREYGLSLITTAPSVVYRVTTTKGEVMEIDNPANLPQVNKIEIIEEPFVKATVMVPKDFVGTVMDLCQGKRGIFSNMEYLGINRVMLTYEIPLSEIIYDFFDQLKSRTKGYASLDYEMIGYRQSELVKMDIMLNGEVLDALSCIVHSERAYTRGRALVEKLRSLIPRQMFEIPVQAAIGNKIIARETVKAMRKDVLAKCYGGDISRKRKLLEKQKEGKRRMKQVGNVEIPQEAFMAVLSIEE</sequence>
<gene>
    <name evidence="1" type="primary">lepA</name>
    <name type="ordered locus">Dred_2501</name>
</gene>
<accession>A4J7F8</accession>
<proteinExistence type="inferred from homology"/>
<reference key="1">
    <citation type="submission" date="2007-03" db="EMBL/GenBank/DDBJ databases">
        <title>Complete sequence of Desulfotomaculum reducens MI-1.</title>
        <authorList>
            <consortium name="US DOE Joint Genome Institute"/>
            <person name="Copeland A."/>
            <person name="Lucas S."/>
            <person name="Lapidus A."/>
            <person name="Barry K."/>
            <person name="Detter J.C."/>
            <person name="Glavina del Rio T."/>
            <person name="Hammon N."/>
            <person name="Israni S."/>
            <person name="Dalin E."/>
            <person name="Tice H."/>
            <person name="Pitluck S."/>
            <person name="Sims D."/>
            <person name="Brettin T."/>
            <person name="Bruce D."/>
            <person name="Han C."/>
            <person name="Tapia R."/>
            <person name="Schmutz J."/>
            <person name="Larimer F."/>
            <person name="Land M."/>
            <person name="Hauser L."/>
            <person name="Kyrpides N."/>
            <person name="Kim E."/>
            <person name="Tebo B.M."/>
            <person name="Richardson P."/>
        </authorList>
    </citation>
    <scope>NUCLEOTIDE SEQUENCE [LARGE SCALE GENOMIC DNA]</scope>
    <source>
        <strain>ATCC BAA-1160 / DSM 100696 / MI-1</strain>
    </source>
</reference>
<organism>
    <name type="scientific">Desulforamulus reducens (strain ATCC BAA-1160 / DSM 100696 / MI-1)</name>
    <name type="common">Desulfotomaculum reducens</name>
    <dbReference type="NCBI Taxonomy" id="349161"/>
    <lineage>
        <taxon>Bacteria</taxon>
        <taxon>Bacillati</taxon>
        <taxon>Bacillota</taxon>
        <taxon>Clostridia</taxon>
        <taxon>Eubacteriales</taxon>
        <taxon>Peptococcaceae</taxon>
        <taxon>Desulforamulus</taxon>
    </lineage>
</organism>
<dbReference type="EC" id="3.6.5.n1" evidence="1"/>
<dbReference type="EMBL" id="CP000612">
    <property type="protein sequence ID" value="ABO51011.1"/>
    <property type="molecule type" value="Genomic_DNA"/>
</dbReference>
<dbReference type="RefSeq" id="WP_011878809.1">
    <property type="nucleotide sequence ID" value="NC_009253.1"/>
</dbReference>
<dbReference type="SMR" id="A4J7F8"/>
<dbReference type="STRING" id="349161.Dred_2501"/>
<dbReference type="KEGG" id="drm:Dred_2501"/>
<dbReference type="eggNOG" id="COG0481">
    <property type="taxonomic scope" value="Bacteria"/>
</dbReference>
<dbReference type="HOGENOM" id="CLU_009995_3_3_9"/>
<dbReference type="OrthoDB" id="9804431at2"/>
<dbReference type="Proteomes" id="UP000001556">
    <property type="component" value="Chromosome"/>
</dbReference>
<dbReference type="GO" id="GO:0005886">
    <property type="term" value="C:plasma membrane"/>
    <property type="evidence" value="ECO:0007669"/>
    <property type="project" value="UniProtKB-SubCell"/>
</dbReference>
<dbReference type="GO" id="GO:0005525">
    <property type="term" value="F:GTP binding"/>
    <property type="evidence" value="ECO:0007669"/>
    <property type="project" value="UniProtKB-UniRule"/>
</dbReference>
<dbReference type="GO" id="GO:0003924">
    <property type="term" value="F:GTPase activity"/>
    <property type="evidence" value="ECO:0007669"/>
    <property type="project" value="UniProtKB-UniRule"/>
</dbReference>
<dbReference type="GO" id="GO:0043022">
    <property type="term" value="F:ribosome binding"/>
    <property type="evidence" value="ECO:0007669"/>
    <property type="project" value="UniProtKB-UniRule"/>
</dbReference>
<dbReference type="GO" id="GO:0003746">
    <property type="term" value="F:translation elongation factor activity"/>
    <property type="evidence" value="ECO:0007669"/>
    <property type="project" value="UniProtKB-UniRule"/>
</dbReference>
<dbReference type="GO" id="GO:0045727">
    <property type="term" value="P:positive regulation of translation"/>
    <property type="evidence" value="ECO:0007669"/>
    <property type="project" value="UniProtKB-UniRule"/>
</dbReference>
<dbReference type="CDD" id="cd03699">
    <property type="entry name" value="EF4_II"/>
    <property type="match status" value="1"/>
</dbReference>
<dbReference type="CDD" id="cd16260">
    <property type="entry name" value="EF4_III"/>
    <property type="match status" value="1"/>
</dbReference>
<dbReference type="CDD" id="cd01890">
    <property type="entry name" value="LepA"/>
    <property type="match status" value="1"/>
</dbReference>
<dbReference type="CDD" id="cd03709">
    <property type="entry name" value="lepA_C"/>
    <property type="match status" value="1"/>
</dbReference>
<dbReference type="FunFam" id="3.40.50.300:FF:000078">
    <property type="entry name" value="Elongation factor 4"/>
    <property type="match status" value="1"/>
</dbReference>
<dbReference type="FunFam" id="2.40.30.10:FF:000015">
    <property type="entry name" value="Translation factor GUF1, mitochondrial"/>
    <property type="match status" value="1"/>
</dbReference>
<dbReference type="FunFam" id="3.30.70.240:FF:000007">
    <property type="entry name" value="Translation factor GUF1, mitochondrial"/>
    <property type="match status" value="1"/>
</dbReference>
<dbReference type="FunFam" id="3.30.70.2570:FF:000001">
    <property type="entry name" value="Translation factor GUF1, mitochondrial"/>
    <property type="match status" value="1"/>
</dbReference>
<dbReference type="FunFam" id="3.30.70.870:FF:000004">
    <property type="entry name" value="Translation factor GUF1, mitochondrial"/>
    <property type="match status" value="1"/>
</dbReference>
<dbReference type="Gene3D" id="3.30.70.240">
    <property type="match status" value="1"/>
</dbReference>
<dbReference type="Gene3D" id="3.30.70.2570">
    <property type="entry name" value="Elongation factor 4, C-terminal domain"/>
    <property type="match status" value="1"/>
</dbReference>
<dbReference type="Gene3D" id="3.30.70.870">
    <property type="entry name" value="Elongation Factor G (Translational Gtpase), domain 3"/>
    <property type="match status" value="1"/>
</dbReference>
<dbReference type="Gene3D" id="3.40.50.300">
    <property type="entry name" value="P-loop containing nucleotide triphosphate hydrolases"/>
    <property type="match status" value="1"/>
</dbReference>
<dbReference type="Gene3D" id="2.40.30.10">
    <property type="entry name" value="Translation factors"/>
    <property type="match status" value="1"/>
</dbReference>
<dbReference type="HAMAP" id="MF_00071">
    <property type="entry name" value="LepA"/>
    <property type="match status" value="1"/>
</dbReference>
<dbReference type="InterPro" id="IPR006297">
    <property type="entry name" value="EF-4"/>
</dbReference>
<dbReference type="InterPro" id="IPR035647">
    <property type="entry name" value="EFG_III/V"/>
</dbReference>
<dbReference type="InterPro" id="IPR000640">
    <property type="entry name" value="EFG_V-like"/>
</dbReference>
<dbReference type="InterPro" id="IPR004161">
    <property type="entry name" value="EFTu-like_2"/>
</dbReference>
<dbReference type="InterPro" id="IPR031157">
    <property type="entry name" value="G_TR_CS"/>
</dbReference>
<dbReference type="InterPro" id="IPR038363">
    <property type="entry name" value="LepA_C_sf"/>
</dbReference>
<dbReference type="InterPro" id="IPR013842">
    <property type="entry name" value="LepA_CTD"/>
</dbReference>
<dbReference type="InterPro" id="IPR035654">
    <property type="entry name" value="LepA_IV"/>
</dbReference>
<dbReference type="InterPro" id="IPR027417">
    <property type="entry name" value="P-loop_NTPase"/>
</dbReference>
<dbReference type="InterPro" id="IPR005225">
    <property type="entry name" value="Small_GTP-bd"/>
</dbReference>
<dbReference type="InterPro" id="IPR000795">
    <property type="entry name" value="T_Tr_GTP-bd_dom"/>
</dbReference>
<dbReference type="InterPro" id="IPR009000">
    <property type="entry name" value="Transl_B-barrel_sf"/>
</dbReference>
<dbReference type="NCBIfam" id="TIGR01393">
    <property type="entry name" value="lepA"/>
    <property type="match status" value="1"/>
</dbReference>
<dbReference type="NCBIfam" id="TIGR00231">
    <property type="entry name" value="small_GTP"/>
    <property type="match status" value="1"/>
</dbReference>
<dbReference type="PANTHER" id="PTHR43512:SF4">
    <property type="entry name" value="TRANSLATION FACTOR GUF1 HOMOLOG, CHLOROPLASTIC"/>
    <property type="match status" value="1"/>
</dbReference>
<dbReference type="PANTHER" id="PTHR43512">
    <property type="entry name" value="TRANSLATION FACTOR GUF1-RELATED"/>
    <property type="match status" value="1"/>
</dbReference>
<dbReference type="Pfam" id="PF00679">
    <property type="entry name" value="EFG_C"/>
    <property type="match status" value="1"/>
</dbReference>
<dbReference type="Pfam" id="PF00009">
    <property type="entry name" value="GTP_EFTU"/>
    <property type="match status" value="1"/>
</dbReference>
<dbReference type="Pfam" id="PF03144">
    <property type="entry name" value="GTP_EFTU_D2"/>
    <property type="match status" value="1"/>
</dbReference>
<dbReference type="Pfam" id="PF06421">
    <property type="entry name" value="LepA_C"/>
    <property type="match status" value="1"/>
</dbReference>
<dbReference type="PRINTS" id="PR00315">
    <property type="entry name" value="ELONGATNFCT"/>
</dbReference>
<dbReference type="SMART" id="SM00838">
    <property type="entry name" value="EFG_C"/>
    <property type="match status" value="1"/>
</dbReference>
<dbReference type="SUPFAM" id="SSF54980">
    <property type="entry name" value="EF-G C-terminal domain-like"/>
    <property type="match status" value="2"/>
</dbReference>
<dbReference type="SUPFAM" id="SSF52540">
    <property type="entry name" value="P-loop containing nucleoside triphosphate hydrolases"/>
    <property type="match status" value="1"/>
</dbReference>
<dbReference type="SUPFAM" id="SSF50447">
    <property type="entry name" value="Translation proteins"/>
    <property type="match status" value="1"/>
</dbReference>
<dbReference type="PROSITE" id="PS00301">
    <property type="entry name" value="G_TR_1"/>
    <property type="match status" value="1"/>
</dbReference>
<dbReference type="PROSITE" id="PS51722">
    <property type="entry name" value="G_TR_2"/>
    <property type="match status" value="1"/>
</dbReference>
<keyword id="KW-1003">Cell membrane</keyword>
<keyword id="KW-0342">GTP-binding</keyword>
<keyword id="KW-0378">Hydrolase</keyword>
<keyword id="KW-0472">Membrane</keyword>
<keyword id="KW-0547">Nucleotide-binding</keyword>
<keyword id="KW-0648">Protein biosynthesis</keyword>
<keyword id="KW-1185">Reference proteome</keyword>